<accession>P17607</accession>
<accession>Q9TUN2</accession>
<keyword id="KW-0929">Antimicrobial</keyword>
<keyword id="KW-0081">Bacteriolytic enzyme</keyword>
<keyword id="KW-0222">Digestion</keyword>
<keyword id="KW-1015">Disulfide bond</keyword>
<keyword id="KW-0326">Glycosidase</keyword>
<keyword id="KW-0378">Hydrolase</keyword>
<keyword id="KW-1185">Reference proteome</keyword>
<keyword id="KW-0964">Secreted</keyword>
<keyword id="KW-0732">Signal</keyword>
<feature type="signal peptide" evidence="1">
    <location>
        <begin position="1"/>
        <end position="18"/>
    </location>
</feature>
<feature type="chain" id="PRO_0000018488" description="Lysozyme C-1">
    <location>
        <begin position="19"/>
        <end position="147"/>
    </location>
</feature>
<feature type="domain" description="C-type lysozyme" evidence="2">
    <location>
        <begin position="19"/>
        <end position="147"/>
    </location>
</feature>
<feature type="active site" evidence="2">
    <location>
        <position position="53"/>
    </location>
</feature>
<feature type="active site" evidence="2">
    <location>
        <position position="71"/>
    </location>
</feature>
<feature type="disulfide bond" evidence="2">
    <location>
        <begin position="24"/>
        <end position="145"/>
    </location>
</feature>
<feature type="disulfide bond" evidence="2">
    <location>
        <begin position="48"/>
        <end position="133"/>
    </location>
</feature>
<feature type="disulfide bond" evidence="2">
    <location>
        <begin position="83"/>
        <end position="99"/>
    </location>
</feature>
<feature type="disulfide bond" evidence="2">
    <location>
        <begin position="95"/>
        <end position="113"/>
    </location>
</feature>
<feature type="sequence variant" description="In isozyme 3A and isozyme 4A/4B.">
    <original>E</original>
    <variation>K</variation>
    <location>
        <position position="32"/>
    </location>
</feature>
<feature type="sequence variant" description="In isozyme 4A/4B.">
    <original>G</original>
    <variation>D</variation>
    <location>
        <position position="37"/>
    </location>
</feature>
<feature type="sequence variant" description="In isozyme 3A.">
    <original>S</original>
    <variation>G</variation>
    <location>
        <position position="55"/>
    </location>
</feature>
<feature type="sequence variant" description="In isozyme 2A, isozyme 3A and isozyme 4A/4B.">
    <original>E</original>
    <variation>A</variation>
    <location>
        <position position="101"/>
    </location>
</feature>
<feature type="sequence variant" description="In isozyme 2A, isozyme 3A and isozyme 4A/4B.">
    <original>N</original>
    <variation>D</variation>
    <location>
        <position position="106"/>
    </location>
</feature>
<feature type="sequence variant" description="In isozyme 2A, isozyme 3A and isozyme 4A/4B.">
    <original>A</original>
    <variation>E</variation>
    <location>
        <position position="108"/>
    </location>
</feature>
<feature type="sequence variant" description="In isozyme 2A, isozyme 3A and isozyme 4A/4B.">
    <original>S</original>
    <variation>T</variation>
    <location>
        <position position="146"/>
    </location>
</feature>
<reference key="1">
    <citation type="journal article" date="1999" name="Mol. Phylogenet. Evol.">
        <title>Mosaic evolution of ruminant stomach lysozyme genes.</title>
        <authorList>
            <person name="Wen Y."/>
            <person name="Irwin D.M."/>
        </authorList>
    </citation>
    <scope>NUCLEOTIDE SEQUENCE [GENOMIC DNA]</scope>
</reference>
<reference key="2">
    <citation type="journal article" date="1990" name="J. Biol. Chem.">
        <title>Concerted evolution of ruminant stomach lysozymes. Characterization of lysozyme cDNA clones from sheep and deer.</title>
        <authorList>
            <person name="Irwin D.M."/>
            <person name="Wilson A.C."/>
        </authorList>
    </citation>
    <scope>NUCLEOTIDE SEQUENCE [MRNA] OF 19-147</scope>
</reference>
<sequence length="147" mass="16195">MKALIILGLLCLSVAVQGKVFERCELARTLKELGLDGYKGVSLANWLCLTKWESSYNTKATNYNPGSESTDYGIFQINSKWWCNDGKTPNAVDGCHVSCSELMENNIAKAVACAKHIVSEQGITAWVAWKSHCRDHDVSSYVEGCSL</sequence>
<comment type="function">
    <text>Lysozymes have primarily a bacteriolytic function; those in tissues and body fluids are associated with the monocyte-macrophage system and enhance the activity of immunoagents.</text>
</comment>
<comment type="catalytic activity">
    <reaction>
        <text>Hydrolysis of (1-&gt;4)-beta-linkages between N-acetylmuramic acid and N-acetyl-D-glucosamine residues in a peptidoglycan and between N-acetyl-D-glucosamine residues in chitodextrins.</text>
        <dbReference type="EC" id="3.2.1.17"/>
    </reaction>
</comment>
<comment type="subunit">
    <text>Monomer.</text>
</comment>
<comment type="subcellular location">
    <subcellularLocation>
        <location evidence="1">Secreted</location>
    </subcellularLocation>
</comment>
<comment type="tissue specificity">
    <text>Expressed in stomach.</text>
</comment>
<comment type="miscellaneous">
    <text>Lysozyme C is capable of both hydrolysis and transglycosylation; it also shows a slight esterase activity. It acts rapidly on both peptide-substituted and unsubstituted peptidoglycan, and slowly on chitin oligosaccharides.</text>
</comment>
<comment type="miscellaneous">
    <text>The sequence of isozyme 1A/1B/1C is shown.</text>
</comment>
<comment type="similarity">
    <text evidence="2">Belongs to the glycosyl hydrolase 22 family.</text>
</comment>
<protein>
    <recommendedName>
        <fullName>Lysozyme C-1</fullName>
        <ecNumber>3.2.1.17</ecNumber>
    </recommendedName>
    <alternativeName>
        <fullName>1,4-beta-N-acetylmuramidase C</fullName>
    </alternativeName>
</protein>
<organism>
    <name type="scientific">Ovis aries</name>
    <name type="common">Sheep</name>
    <dbReference type="NCBI Taxonomy" id="9940"/>
    <lineage>
        <taxon>Eukaryota</taxon>
        <taxon>Metazoa</taxon>
        <taxon>Chordata</taxon>
        <taxon>Craniata</taxon>
        <taxon>Vertebrata</taxon>
        <taxon>Euteleostomi</taxon>
        <taxon>Mammalia</taxon>
        <taxon>Eutheria</taxon>
        <taxon>Laurasiatheria</taxon>
        <taxon>Artiodactyla</taxon>
        <taxon>Ruminantia</taxon>
        <taxon>Pecora</taxon>
        <taxon>Bovidae</taxon>
        <taxon>Caprinae</taxon>
        <taxon>Ovis</taxon>
    </lineage>
</organism>
<dbReference type="EC" id="3.2.1.17"/>
<dbReference type="EMBL" id="AF170555">
    <property type="protein sequence ID" value="AAD51636.1"/>
    <property type="molecule type" value="Genomic_DNA"/>
</dbReference>
<dbReference type="EMBL" id="AF170552">
    <property type="protein sequence ID" value="AAD51636.1"/>
    <property type="status" value="JOINED"/>
    <property type="molecule type" value="Genomic_DNA"/>
</dbReference>
<dbReference type="EMBL" id="AF170553">
    <property type="protein sequence ID" value="AAD51636.1"/>
    <property type="status" value="JOINED"/>
    <property type="molecule type" value="Genomic_DNA"/>
</dbReference>
<dbReference type="EMBL" id="AF170554">
    <property type="protein sequence ID" value="AAD51636.1"/>
    <property type="status" value="JOINED"/>
    <property type="molecule type" value="Genomic_DNA"/>
</dbReference>
<dbReference type="EMBL" id="M32492">
    <property type="protein sequence ID" value="AAA31557.1"/>
    <property type="molecule type" value="mRNA"/>
</dbReference>
<dbReference type="EMBL" id="M32493">
    <property type="protein sequence ID" value="AAA31558.1"/>
    <property type="molecule type" value="mRNA"/>
</dbReference>
<dbReference type="EMBL" id="M32494">
    <property type="protein sequence ID" value="AAA31559.1"/>
    <property type="molecule type" value="mRNA"/>
</dbReference>
<dbReference type="EMBL" id="M32495">
    <property type="protein sequence ID" value="AAA31560.1"/>
    <property type="molecule type" value="mRNA"/>
</dbReference>
<dbReference type="EMBL" id="M32496">
    <property type="protein sequence ID" value="AAA31561.1"/>
    <property type="molecule type" value="mRNA"/>
</dbReference>
<dbReference type="EMBL" id="M32497">
    <property type="protein sequence ID" value="AAA31562.1"/>
    <property type="molecule type" value="mRNA"/>
</dbReference>
<dbReference type="EMBL" id="M32498">
    <property type="protein sequence ID" value="AAA31563.1"/>
    <property type="molecule type" value="mRNA"/>
</dbReference>
<dbReference type="PIR" id="D35558">
    <property type="entry name" value="D35558"/>
</dbReference>
<dbReference type="PIR" id="E35558">
    <property type="entry name" value="E35558"/>
</dbReference>
<dbReference type="PIR" id="F35558">
    <property type="entry name" value="F35558"/>
</dbReference>
<dbReference type="RefSeq" id="NP_001295517.1">
    <property type="nucleotide sequence ID" value="NM_001308588.1"/>
</dbReference>
<dbReference type="SMR" id="P17607"/>
<dbReference type="CAZy" id="GH22">
    <property type="family name" value="Glycoside Hydrolase Family 22"/>
</dbReference>
<dbReference type="GeneID" id="443320"/>
<dbReference type="KEGG" id="oas:443320"/>
<dbReference type="OrthoDB" id="9698384at2759"/>
<dbReference type="Proteomes" id="UP000002356">
    <property type="component" value="Unplaced"/>
</dbReference>
<dbReference type="GO" id="GO:0005576">
    <property type="term" value="C:extracellular region"/>
    <property type="evidence" value="ECO:0007669"/>
    <property type="project" value="UniProtKB-SubCell"/>
</dbReference>
<dbReference type="GO" id="GO:0003796">
    <property type="term" value="F:lysozyme activity"/>
    <property type="evidence" value="ECO:0007669"/>
    <property type="project" value="UniProtKB-EC"/>
</dbReference>
<dbReference type="GO" id="GO:0050829">
    <property type="term" value="P:defense response to Gram-negative bacterium"/>
    <property type="evidence" value="ECO:0007669"/>
    <property type="project" value="TreeGrafter"/>
</dbReference>
<dbReference type="GO" id="GO:0050830">
    <property type="term" value="P:defense response to Gram-positive bacterium"/>
    <property type="evidence" value="ECO:0007669"/>
    <property type="project" value="TreeGrafter"/>
</dbReference>
<dbReference type="GO" id="GO:0007586">
    <property type="term" value="P:digestion"/>
    <property type="evidence" value="ECO:0007669"/>
    <property type="project" value="UniProtKB-KW"/>
</dbReference>
<dbReference type="GO" id="GO:0031640">
    <property type="term" value="P:killing of cells of another organism"/>
    <property type="evidence" value="ECO:0007669"/>
    <property type="project" value="UniProtKB-KW"/>
</dbReference>
<dbReference type="CDD" id="cd16897">
    <property type="entry name" value="LYZ_C"/>
    <property type="match status" value="1"/>
</dbReference>
<dbReference type="FunFam" id="1.10.530.10:FF:000001">
    <property type="entry name" value="Lysozyme C"/>
    <property type="match status" value="1"/>
</dbReference>
<dbReference type="Gene3D" id="1.10.530.10">
    <property type="match status" value="1"/>
</dbReference>
<dbReference type="InterPro" id="IPR001916">
    <property type="entry name" value="Glyco_hydro_22"/>
</dbReference>
<dbReference type="InterPro" id="IPR019799">
    <property type="entry name" value="Glyco_hydro_22_CS"/>
</dbReference>
<dbReference type="InterPro" id="IPR000974">
    <property type="entry name" value="Glyco_hydro_22_lys"/>
</dbReference>
<dbReference type="InterPro" id="IPR023346">
    <property type="entry name" value="Lysozyme-like_dom_sf"/>
</dbReference>
<dbReference type="PANTHER" id="PTHR11407">
    <property type="entry name" value="LYSOZYME C"/>
    <property type="match status" value="1"/>
</dbReference>
<dbReference type="PANTHER" id="PTHR11407:SF28">
    <property type="entry name" value="LYSOZYME C"/>
    <property type="match status" value="1"/>
</dbReference>
<dbReference type="Pfam" id="PF00062">
    <property type="entry name" value="Lys"/>
    <property type="match status" value="1"/>
</dbReference>
<dbReference type="PRINTS" id="PR00137">
    <property type="entry name" value="LYSOZYME"/>
</dbReference>
<dbReference type="PRINTS" id="PR00135">
    <property type="entry name" value="LYZLACT"/>
</dbReference>
<dbReference type="SMART" id="SM00263">
    <property type="entry name" value="LYZ1"/>
    <property type="match status" value="1"/>
</dbReference>
<dbReference type="SUPFAM" id="SSF53955">
    <property type="entry name" value="Lysozyme-like"/>
    <property type="match status" value="1"/>
</dbReference>
<dbReference type="PROSITE" id="PS00128">
    <property type="entry name" value="GLYCOSYL_HYDROL_F22_1"/>
    <property type="match status" value="1"/>
</dbReference>
<dbReference type="PROSITE" id="PS51348">
    <property type="entry name" value="GLYCOSYL_HYDROL_F22_2"/>
    <property type="match status" value="1"/>
</dbReference>
<proteinExistence type="evidence at transcript level"/>
<name>LYSC1_SHEEP</name>
<evidence type="ECO:0000250" key="1"/>
<evidence type="ECO:0000255" key="2">
    <source>
        <dbReference type="PROSITE-ProRule" id="PRU00680"/>
    </source>
</evidence>